<feature type="chain" id="PRO_0000329898" description="Polyribonucleotide nucleotidyltransferase">
    <location>
        <begin position="1"/>
        <end position="721"/>
    </location>
</feature>
<feature type="domain" description="KH" evidence="1">
    <location>
        <begin position="562"/>
        <end position="621"/>
    </location>
</feature>
<feature type="domain" description="S1 motif" evidence="1">
    <location>
        <begin position="631"/>
        <end position="699"/>
    </location>
</feature>
<feature type="region of interest" description="Disordered" evidence="2">
    <location>
        <begin position="700"/>
        <end position="721"/>
    </location>
</feature>
<feature type="binding site" evidence="1">
    <location>
        <position position="495"/>
    </location>
    <ligand>
        <name>Mg(2+)</name>
        <dbReference type="ChEBI" id="CHEBI:18420"/>
    </ligand>
</feature>
<feature type="binding site" evidence="1">
    <location>
        <position position="501"/>
    </location>
    <ligand>
        <name>Mg(2+)</name>
        <dbReference type="ChEBI" id="CHEBI:18420"/>
    </ligand>
</feature>
<name>PNP_SYNS9</name>
<accession>Q3AV44</accession>
<proteinExistence type="inferred from homology"/>
<evidence type="ECO:0000255" key="1">
    <source>
        <dbReference type="HAMAP-Rule" id="MF_01595"/>
    </source>
</evidence>
<evidence type="ECO:0000256" key="2">
    <source>
        <dbReference type="SAM" id="MobiDB-lite"/>
    </source>
</evidence>
<keyword id="KW-0963">Cytoplasm</keyword>
<keyword id="KW-0460">Magnesium</keyword>
<keyword id="KW-0479">Metal-binding</keyword>
<keyword id="KW-0548">Nucleotidyltransferase</keyword>
<keyword id="KW-1185">Reference proteome</keyword>
<keyword id="KW-0694">RNA-binding</keyword>
<keyword id="KW-0808">Transferase</keyword>
<gene>
    <name evidence="1" type="primary">pnp</name>
    <name type="ordered locus">Syncc9902_1794</name>
</gene>
<reference key="1">
    <citation type="submission" date="2005-08" db="EMBL/GenBank/DDBJ databases">
        <title>Complete sequence of Synechococcus sp. CC9902.</title>
        <authorList>
            <person name="Copeland A."/>
            <person name="Lucas S."/>
            <person name="Lapidus A."/>
            <person name="Barry K."/>
            <person name="Detter J.C."/>
            <person name="Glavina T."/>
            <person name="Hammon N."/>
            <person name="Israni S."/>
            <person name="Pitluck S."/>
            <person name="Martinez M."/>
            <person name="Schmutz J."/>
            <person name="Larimer F."/>
            <person name="Land M."/>
            <person name="Kyrpides N."/>
            <person name="Ivanova N."/>
            <person name="Richardson P."/>
        </authorList>
    </citation>
    <scope>NUCLEOTIDE SEQUENCE [LARGE SCALE GENOMIC DNA]</scope>
    <source>
        <strain>CC9902</strain>
    </source>
</reference>
<protein>
    <recommendedName>
        <fullName evidence="1">Polyribonucleotide nucleotidyltransferase</fullName>
        <ecNumber evidence="1">2.7.7.8</ecNumber>
    </recommendedName>
    <alternativeName>
        <fullName evidence="1">Polynucleotide phosphorylase</fullName>
        <shortName evidence="1">PNPase</shortName>
    </alternativeName>
</protein>
<organism>
    <name type="scientific">Synechococcus sp. (strain CC9902)</name>
    <dbReference type="NCBI Taxonomy" id="316279"/>
    <lineage>
        <taxon>Bacteria</taxon>
        <taxon>Bacillati</taxon>
        <taxon>Cyanobacteriota</taxon>
        <taxon>Cyanophyceae</taxon>
        <taxon>Synechococcales</taxon>
        <taxon>Synechococcaceae</taxon>
        <taxon>Synechococcus</taxon>
    </lineage>
</organism>
<dbReference type="EC" id="2.7.7.8" evidence="1"/>
<dbReference type="EMBL" id="CP000097">
    <property type="protein sequence ID" value="ABB26751.1"/>
    <property type="molecule type" value="Genomic_DNA"/>
</dbReference>
<dbReference type="RefSeq" id="WP_011360557.1">
    <property type="nucleotide sequence ID" value="NC_007513.1"/>
</dbReference>
<dbReference type="SMR" id="Q3AV44"/>
<dbReference type="STRING" id="316279.Syncc9902_1794"/>
<dbReference type="KEGG" id="sye:Syncc9902_1794"/>
<dbReference type="eggNOG" id="COG1185">
    <property type="taxonomic scope" value="Bacteria"/>
</dbReference>
<dbReference type="HOGENOM" id="CLU_004217_2_2_3"/>
<dbReference type="OrthoDB" id="9804305at2"/>
<dbReference type="Proteomes" id="UP000002712">
    <property type="component" value="Chromosome"/>
</dbReference>
<dbReference type="GO" id="GO:0005829">
    <property type="term" value="C:cytosol"/>
    <property type="evidence" value="ECO:0007669"/>
    <property type="project" value="TreeGrafter"/>
</dbReference>
<dbReference type="GO" id="GO:0000175">
    <property type="term" value="F:3'-5'-RNA exonuclease activity"/>
    <property type="evidence" value="ECO:0007669"/>
    <property type="project" value="TreeGrafter"/>
</dbReference>
<dbReference type="GO" id="GO:0000287">
    <property type="term" value="F:magnesium ion binding"/>
    <property type="evidence" value="ECO:0007669"/>
    <property type="project" value="UniProtKB-UniRule"/>
</dbReference>
<dbReference type="GO" id="GO:0004654">
    <property type="term" value="F:polyribonucleotide nucleotidyltransferase activity"/>
    <property type="evidence" value="ECO:0007669"/>
    <property type="project" value="UniProtKB-UniRule"/>
</dbReference>
<dbReference type="GO" id="GO:0003723">
    <property type="term" value="F:RNA binding"/>
    <property type="evidence" value="ECO:0007669"/>
    <property type="project" value="UniProtKB-UniRule"/>
</dbReference>
<dbReference type="GO" id="GO:0006402">
    <property type="term" value="P:mRNA catabolic process"/>
    <property type="evidence" value="ECO:0007669"/>
    <property type="project" value="UniProtKB-UniRule"/>
</dbReference>
<dbReference type="GO" id="GO:0006396">
    <property type="term" value="P:RNA processing"/>
    <property type="evidence" value="ECO:0007669"/>
    <property type="project" value="InterPro"/>
</dbReference>
<dbReference type="CDD" id="cd02393">
    <property type="entry name" value="KH-I_PNPase"/>
    <property type="match status" value="1"/>
</dbReference>
<dbReference type="CDD" id="cd11363">
    <property type="entry name" value="RNase_PH_PNPase_1"/>
    <property type="match status" value="1"/>
</dbReference>
<dbReference type="CDD" id="cd11364">
    <property type="entry name" value="RNase_PH_PNPase_2"/>
    <property type="match status" value="1"/>
</dbReference>
<dbReference type="FunFam" id="2.40.50.140:FF:000023">
    <property type="entry name" value="Polyribonucleotide nucleotidyltransferase"/>
    <property type="match status" value="1"/>
</dbReference>
<dbReference type="FunFam" id="3.30.1370.10:FF:000001">
    <property type="entry name" value="Polyribonucleotide nucleotidyltransferase"/>
    <property type="match status" value="1"/>
</dbReference>
<dbReference type="FunFam" id="3.30.230.70:FF:000001">
    <property type="entry name" value="Polyribonucleotide nucleotidyltransferase"/>
    <property type="match status" value="1"/>
</dbReference>
<dbReference type="FunFam" id="3.30.230.70:FF:000002">
    <property type="entry name" value="Polyribonucleotide nucleotidyltransferase"/>
    <property type="match status" value="1"/>
</dbReference>
<dbReference type="Gene3D" id="3.30.230.70">
    <property type="entry name" value="GHMP Kinase, N-terminal domain"/>
    <property type="match status" value="2"/>
</dbReference>
<dbReference type="Gene3D" id="3.30.1370.10">
    <property type="entry name" value="K Homology domain, type 1"/>
    <property type="match status" value="1"/>
</dbReference>
<dbReference type="Gene3D" id="2.40.50.140">
    <property type="entry name" value="Nucleic acid-binding proteins"/>
    <property type="match status" value="1"/>
</dbReference>
<dbReference type="HAMAP" id="MF_01595">
    <property type="entry name" value="PNPase"/>
    <property type="match status" value="1"/>
</dbReference>
<dbReference type="InterPro" id="IPR001247">
    <property type="entry name" value="ExoRNase_PH_dom1"/>
</dbReference>
<dbReference type="InterPro" id="IPR015847">
    <property type="entry name" value="ExoRNase_PH_dom2"/>
</dbReference>
<dbReference type="InterPro" id="IPR036345">
    <property type="entry name" value="ExoRNase_PH_dom2_sf"/>
</dbReference>
<dbReference type="InterPro" id="IPR004087">
    <property type="entry name" value="KH_dom"/>
</dbReference>
<dbReference type="InterPro" id="IPR004088">
    <property type="entry name" value="KH_dom_type_1"/>
</dbReference>
<dbReference type="InterPro" id="IPR036612">
    <property type="entry name" value="KH_dom_type_1_sf"/>
</dbReference>
<dbReference type="InterPro" id="IPR012340">
    <property type="entry name" value="NA-bd_OB-fold"/>
</dbReference>
<dbReference type="InterPro" id="IPR012162">
    <property type="entry name" value="PNPase"/>
</dbReference>
<dbReference type="InterPro" id="IPR027408">
    <property type="entry name" value="PNPase/RNase_PH_dom_sf"/>
</dbReference>
<dbReference type="InterPro" id="IPR015848">
    <property type="entry name" value="PNPase_PH_RNA-bd_bac/org-type"/>
</dbReference>
<dbReference type="InterPro" id="IPR020568">
    <property type="entry name" value="Ribosomal_Su5_D2-typ_SF"/>
</dbReference>
<dbReference type="InterPro" id="IPR003029">
    <property type="entry name" value="S1_domain"/>
</dbReference>
<dbReference type="NCBIfam" id="TIGR03591">
    <property type="entry name" value="polynuc_phos"/>
    <property type="match status" value="1"/>
</dbReference>
<dbReference type="NCBIfam" id="NF008805">
    <property type="entry name" value="PRK11824.1"/>
    <property type="match status" value="1"/>
</dbReference>
<dbReference type="PANTHER" id="PTHR11252">
    <property type="entry name" value="POLYRIBONUCLEOTIDE NUCLEOTIDYLTRANSFERASE"/>
    <property type="match status" value="1"/>
</dbReference>
<dbReference type="PANTHER" id="PTHR11252:SF0">
    <property type="entry name" value="POLYRIBONUCLEOTIDE NUCLEOTIDYLTRANSFERASE 1, MITOCHONDRIAL"/>
    <property type="match status" value="1"/>
</dbReference>
<dbReference type="Pfam" id="PF00013">
    <property type="entry name" value="KH_1"/>
    <property type="match status" value="1"/>
</dbReference>
<dbReference type="Pfam" id="PF03726">
    <property type="entry name" value="PNPase"/>
    <property type="match status" value="1"/>
</dbReference>
<dbReference type="Pfam" id="PF01138">
    <property type="entry name" value="RNase_PH"/>
    <property type="match status" value="2"/>
</dbReference>
<dbReference type="Pfam" id="PF03725">
    <property type="entry name" value="RNase_PH_C"/>
    <property type="match status" value="1"/>
</dbReference>
<dbReference type="Pfam" id="PF00575">
    <property type="entry name" value="S1"/>
    <property type="match status" value="1"/>
</dbReference>
<dbReference type="PIRSF" id="PIRSF005499">
    <property type="entry name" value="PNPase"/>
    <property type="match status" value="1"/>
</dbReference>
<dbReference type="SMART" id="SM00322">
    <property type="entry name" value="KH"/>
    <property type="match status" value="1"/>
</dbReference>
<dbReference type="SMART" id="SM00316">
    <property type="entry name" value="S1"/>
    <property type="match status" value="1"/>
</dbReference>
<dbReference type="SUPFAM" id="SSF54791">
    <property type="entry name" value="Eukaryotic type KH-domain (KH-domain type I)"/>
    <property type="match status" value="1"/>
</dbReference>
<dbReference type="SUPFAM" id="SSF50249">
    <property type="entry name" value="Nucleic acid-binding proteins"/>
    <property type="match status" value="1"/>
</dbReference>
<dbReference type="SUPFAM" id="SSF55666">
    <property type="entry name" value="Ribonuclease PH domain 2-like"/>
    <property type="match status" value="2"/>
</dbReference>
<dbReference type="SUPFAM" id="SSF54211">
    <property type="entry name" value="Ribosomal protein S5 domain 2-like"/>
    <property type="match status" value="2"/>
</dbReference>
<dbReference type="PROSITE" id="PS50084">
    <property type="entry name" value="KH_TYPE_1"/>
    <property type="match status" value="1"/>
</dbReference>
<dbReference type="PROSITE" id="PS50126">
    <property type="entry name" value="S1"/>
    <property type="match status" value="1"/>
</dbReference>
<sequence length="721" mass="77825">MQGKTQSISFDGREIRLTTGRFAPQAGGSVLVECGDTAVLVTATRSKGRDGIDFLPLICDYEERLYAAGRIPGSYMRREARPPERATLTCRLIDRPMRPLFPSWMRDDLQVVATCLSLDERVPSDVLAVTGASIATLLAGIPFNGPMAAVRVGLLGDDFVLNPSYREIERGDLDLVVAGTADGVVMVEAGANQLPEGDVIEAIDFGYEAIQELIKAQETLLKDLGIKQVKPEAPKEDTTVPAYLEKQCTKAISAVLSKFEQSKEDRDNGLEAVKADAAEAIAALKEDDAVRQAVSSSSKLLGNSFKALTKKLMRQQILKDGKRVDGRGLDEVRQISAMAGVLPRRVHGSGLFQRGLTQVLSTATLGTPSDAQEMDDLHPNTEKLYLHHYNFPPYSVGETRPMRSPGRREIGHGALAERAILPVLPEKDTFPYVVRVVSEVLSSNGSTSMGSVCGSTLALMDAGVPLKAPVSGAAMGLIKEGKDIKILTDIQGIEDFLGDMDFKVAGSEKGITALQMDMKITGLPVKVMAEAVNQARPARLHILEKMLEAIDKPRETLSPHAPRLLSFRIDPELIGTVIGPGGRTIKGITERTNTKIDIEDSGIVTIASHDGAAAEEAQKIIEGLTRKVNEGEMFSGSITRIIPIGAFVEILPGKEGMIHISQLSEARVEKVEDVVKVGDEVTVRVREIDNRGRINLTLRGVPQSGESTEVEPQPTPVAPLS</sequence>
<comment type="function">
    <text evidence="1">Involved in mRNA degradation. Catalyzes the phosphorolysis of single-stranded polyribonucleotides processively in the 3'- to 5'-direction.</text>
</comment>
<comment type="catalytic activity">
    <reaction evidence="1">
        <text>RNA(n+1) + phosphate = RNA(n) + a ribonucleoside 5'-diphosphate</text>
        <dbReference type="Rhea" id="RHEA:22096"/>
        <dbReference type="Rhea" id="RHEA-COMP:14527"/>
        <dbReference type="Rhea" id="RHEA-COMP:17342"/>
        <dbReference type="ChEBI" id="CHEBI:43474"/>
        <dbReference type="ChEBI" id="CHEBI:57930"/>
        <dbReference type="ChEBI" id="CHEBI:140395"/>
        <dbReference type="EC" id="2.7.7.8"/>
    </reaction>
</comment>
<comment type="cofactor">
    <cofactor evidence="1">
        <name>Mg(2+)</name>
        <dbReference type="ChEBI" id="CHEBI:18420"/>
    </cofactor>
</comment>
<comment type="subcellular location">
    <subcellularLocation>
        <location evidence="1">Cytoplasm</location>
    </subcellularLocation>
</comment>
<comment type="similarity">
    <text evidence="1">Belongs to the polyribonucleotide nucleotidyltransferase family.</text>
</comment>